<dbReference type="EC" id="7.1.1.-" evidence="1"/>
<dbReference type="EMBL" id="AM777385">
    <property type="protein sequence ID" value="CAO86028.1"/>
    <property type="molecule type" value="Genomic_DNA"/>
</dbReference>
<dbReference type="RefSeq" id="YP_001531334.1">
    <property type="nucleotide sequence ID" value="NC_009950.1"/>
</dbReference>
<dbReference type="SMR" id="A8Y9D9"/>
<dbReference type="GeneID" id="5696602"/>
<dbReference type="KEGG" id="lper:5696602"/>
<dbReference type="GO" id="GO:0009535">
    <property type="term" value="C:chloroplast thylakoid membrane"/>
    <property type="evidence" value="ECO:0007669"/>
    <property type="project" value="UniProtKB-SubCell"/>
</dbReference>
<dbReference type="GO" id="GO:0030964">
    <property type="term" value="C:NADH dehydrogenase complex"/>
    <property type="evidence" value="ECO:0007669"/>
    <property type="project" value="TreeGrafter"/>
</dbReference>
<dbReference type="GO" id="GO:0016655">
    <property type="term" value="F:oxidoreductase activity, acting on NAD(P)H, quinone or similar compound as acceptor"/>
    <property type="evidence" value="ECO:0007669"/>
    <property type="project" value="UniProtKB-UniRule"/>
</dbReference>
<dbReference type="GO" id="GO:0048038">
    <property type="term" value="F:quinone binding"/>
    <property type="evidence" value="ECO:0007669"/>
    <property type="project" value="UniProtKB-KW"/>
</dbReference>
<dbReference type="GO" id="GO:0042773">
    <property type="term" value="P:ATP synthesis coupled electron transport"/>
    <property type="evidence" value="ECO:0007669"/>
    <property type="project" value="InterPro"/>
</dbReference>
<dbReference type="GO" id="GO:0019684">
    <property type="term" value="P:photosynthesis, light reaction"/>
    <property type="evidence" value="ECO:0007669"/>
    <property type="project" value="UniProtKB-UniRule"/>
</dbReference>
<dbReference type="FunFam" id="1.10.287.3510:FF:000001">
    <property type="entry name" value="NADH-quinone oxidoreductase subunit K"/>
    <property type="match status" value="1"/>
</dbReference>
<dbReference type="Gene3D" id="1.10.287.3510">
    <property type="match status" value="1"/>
</dbReference>
<dbReference type="HAMAP" id="MF_01456">
    <property type="entry name" value="NDH1_NuoK"/>
    <property type="match status" value="1"/>
</dbReference>
<dbReference type="InterPro" id="IPR001133">
    <property type="entry name" value="NADH_UbQ_OxRdtase_chain4L/K"/>
</dbReference>
<dbReference type="InterPro" id="IPR039428">
    <property type="entry name" value="NUOK/Mnh_C1-like"/>
</dbReference>
<dbReference type="NCBIfam" id="NF004320">
    <property type="entry name" value="PRK05715.1-2"/>
    <property type="match status" value="1"/>
</dbReference>
<dbReference type="PANTHER" id="PTHR11434:SF16">
    <property type="entry name" value="NADH-UBIQUINONE OXIDOREDUCTASE CHAIN 4L"/>
    <property type="match status" value="1"/>
</dbReference>
<dbReference type="PANTHER" id="PTHR11434">
    <property type="entry name" value="NADH-UBIQUINONE OXIDOREDUCTASE SUBUNIT ND4L"/>
    <property type="match status" value="1"/>
</dbReference>
<dbReference type="Pfam" id="PF00420">
    <property type="entry name" value="Oxidored_q2"/>
    <property type="match status" value="1"/>
</dbReference>
<accession>A8Y9D9</accession>
<comment type="function">
    <text evidence="1">NDH shuttles electrons from NAD(P)H:plastoquinone, via FMN and iron-sulfur (Fe-S) centers, to quinones in the photosynthetic chain and possibly in a chloroplast respiratory chain. The immediate electron acceptor for the enzyme in this species is believed to be plastoquinone. Couples the redox reaction to proton translocation, and thus conserves the redox energy in a proton gradient.</text>
</comment>
<comment type="catalytic activity">
    <reaction evidence="1">
        <text>a plastoquinone + NADH + (n+1) H(+)(in) = a plastoquinol + NAD(+) + n H(+)(out)</text>
        <dbReference type="Rhea" id="RHEA:42608"/>
        <dbReference type="Rhea" id="RHEA-COMP:9561"/>
        <dbReference type="Rhea" id="RHEA-COMP:9562"/>
        <dbReference type="ChEBI" id="CHEBI:15378"/>
        <dbReference type="ChEBI" id="CHEBI:17757"/>
        <dbReference type="ChEBI" id="CHEBI:57540"/>
        <dbReference type="ChEBI" id="CHEBI:57945"/>
        <dbReference type="ChEBI" id="CHEBI:62192"/>
    </reaction>
</comment>
<comment type="catalytic activity">
    <reaction evidence="1">
        <text>a plastoquinone + NADPH + (n+1) H(+)(in) = a plastoquinol + NADP(+) + n H(+)(out)</text>
        <dbReference type="Rhea" id="RHEA:42612"/>
        <dbReference type="Rhea" id="RHEA-COMP:9561"/>
        <dbReference type="Rhea" id="RHEA-COMP:9562"/>
        <dbReference type="ChEBI" id="CHEBI:15378"/>
        <dbReference type="ChEBI" id="CHEBI:17757"/>
        <dbReference type="ChEBI" id="CHEBI:57783"/>
        <dbReference type="ChEBI" id="CHEBI:58349"/>
        <dbReference type="ChEBI" id="CHEBI:62192"/>
    </reaction>
</comment>
<comment type="subunit">
    <text evidence="1">NDH is composed of at least 16 different subunits, 5 of which are encoded in the nucleus.</text>
</comment>
<comment type="subcellular location">
    <subcellularLocation>
        <location evidence="1">Plastid</location>
        <location evidence="1">Chloroplast thylakoid membrane</location>
        <topology evidence="1">Multi-pass membrane protein</topology>
    </subcellularLocation>
</comment>
<comment type="similarity">
    <text evidence="1">Belongs to the complex I subunit 4L family.</text>
</comment>
<organism>
    <name type="scientific">Lolium perenne</name>
    <name type="common">Perennial ryegrass</name>
    <dbReference type="NCBI Taxonomy" id="4522"/>
    <lineage>
        <taxon>Eukaryota</taxon>
        <taxon>Viridiplantae</taxon>
        <taxon>Streptophyta</taxon>
        <taxon>Embryophyta</taxon>
        <taxon>Tracheophyta</taxon>
        <taxon>Spermatophyta</taxon>
        <taxon>Magnoliopsida</taxon>
        <taxon>Liliopsida</taxon>
        <taxon>Poales</taxon>
        <taxon>Poaceae</taxon>
        <taxon>BOP clade</taxon>
        <taxon>Pooideae</taxon>
        <taxon>Poodae</taxon>
        <taxon>Poeae</taxon>
        <taxon>Poeae Chloroplast Group 2 (Poeae type)</taxon>
        <taxon>Loliodinae</taxon>
        <taxon>Loliinae</taxon>
        <taxon>Lolium</taxon>
    </lineage>
</organism>
<evidence type="ECO:0000255" key="1">
    <source>
        <dbReference type="HAMAP-Rule" id="MF_01456"/>
    </source>
</evidence>
<proteinExistence type="inferred from homology"/>
<keyword id="KW-0150">Chloroplast</keyword>
<keyword id="KW-0472">Membrane</keyword>
<keyword id="KW-0520">NAD</keyword>
<keyword id="KW-0521">NADP</keyword>
<keyword id="KW-0934">Plastid</keyword>
<keyword id="KW-0618">Plastoquinone</keyword>
<keyword id="KW-0874">Quinone</keyword>
<keyword id="KW-0793">Thylakoid</keyword>
<keyword id="KW-1278">Translocase</keyword>
<keyword id="KW-0812">Transmembrane</keyword>
<keyword id="KW-1133">Transmembrane helix</keyword>
<keyword id="KW-0813">Transport</keyword>
<reference key="1">
    <citation type="journal article" date="2008" name="PLoS ONE">
        <title>An optimized chloroplast DNA extraction protocol for grasses (Poaceae) proves suitable for whole plastid genome sequencing and SNP detection.</title>
        <authorList>
            <person name="Diekmann K."/>
            <person name="Hodkinson T.R."/>
            <person name="Fricke E."/>
            <person name="Barth S."/>
        </authorList>
    </citation>
    <scope>NUCLEOTIDE SEQUENCE [LARGE SCALE GENOMIC DNA]</scope>
    <source>
        <strain>cv. Cashel</strain>
    </source>
</reference>
<protein>
    <recommendedName>
        <fullName evidence="1">NAD(P)H-quinone oxidoreductase subunit 4L, chloroplastic</fullName>
        <ecNumber evidence="1">7.1.1.-</ecNumber>
    </recommendedName>
    <alternativeName>
        <fullName evidence="1">NAD(P)H dehydrogenase subunit 4L</fullName>
    </alternativeName>
    <alternativeName>
        <fullName evidence="1">NADH-plastoquinone oxidoreductase subunit 4L</fullName>
    </alternativeName>
</protein>
<gene>
    <name evidence="1" type="primary">ndhE</name>
    <name type="ordered locus">LopeCp108</name>
</gene>
<name>NU4LC_LOLPR</name>
<sequence>MMFELVLFLSVYLFSIGIYGLITSRNMVRALICLELILNSINLNLVTFSDLFDSRQLKGDIFAIFVIALAAAEAAIGLSILSSIHRNRKSTRINQSNLLNN</sequence>
<geneLocation type="chloroplast"/>
<feature type="chain" id="PRO_0000360343" description="NAD(P)H-quinone oxidoreductase subunit 4L, chloroplastic">
    <location>
        <begin position="1"/>
        <end position="101"/>
    </location>
</feature>
<feature type="transmembrane region" description="Helical" evidence="1">
    <location>
        <begin position="2"/>
        <end position="22"/>
    </location>
</feature>
<feature type="transmembrane region" description="Helical" evidence="1">
    <location>
        <begin position="32"/>
        <end position="52"/>
    </location>
</feature>
<feature type="transmembrane region" description="Helical" evidence="1">
    <location>
        <begin position="61"/>
        <end position="81"/>
    </location>
</feature>